<accession>G5EGI7</accession>
<sequence>MKNLLLITFFVVSTVTALGGRGSKSALVLVAARSSENHPLHATDPITIWCAPDNPQVVIKTAHFIRSSDNEKLEAALNPTKKNATYTFGSPSVKDAGEYKCELDTPHGKISHKVFIYSRPVVHSHEHFTEHEGHEFHLESTGTTVEKGESVTLTCPVTGYPKPVVKWTKDSAPLALSQSVSMEGSTVIVTNANYTDAGTYSCEAVNEYTVNGKTSKMLLVVDKMVDVRSEFQWVYPLAVILITIFLLVVIIVFCEWRNKKSTSKA</sequence>
<feature type="signal peptide" evidence="1">
    <location>
        <begin position="1"/>
        <end position="17"/>
    </location>
</feature>
<feature type="chain" id="PRO_5007661293" description="Zwei Ig domain protein zig-1">
    <location>
        <begin position="18"/>
        <end position="265"/>
    </location>
</feature>
<feature type="topological domain" description="Extracellular" evidence="8">
    <location>
        <begin position="18"/>
        <end position="232"/>
    </location>
</feature>
<feature type="transmembrane region" description="Helical" evidence="1">
    <location>
        <begin position="233"/>
        <end position="253"/>
    </location>
</feature>
<feature type="topological domain" description="Cytoplasmic" evidence="8">
    <location>
        <begin position="254"/>
        <end position="265"/>
    </location>
</feature>
<feature type="domain" description="Ig-like C2-type 1" evidence="1">
    <location>
        <begin position="41"/>
        <end position="108"/>
    </location>
</feature>
<feature type="domain" description="Ig-like C2-type 2" evidence="2">
    <location>
        <begin position="120"/>
        <end position="220"/>
    </location>
</feature>
<feature type="glycosylation site" description="N-linked (GlcNAc...) asparagine" evidence="3">
    <location>
        <position position="83"/>
    </location>
</feature>
<feature type="glycosylation site" description="N-linked (GlcNAc...) asparagine" evidence="3">
    <location>
        <position position="193"/>
    </location>
</feature>
<feature type="disulfide bond" evidence="2">
    <location>
        <begin position="155"/>
        <end position="202"/>
    </location>
</feature>
<evidence type="ECO:0000255" key="1"/>
<evidence type="ECO:0000255" key="2">
    <source>
        <dbReference type="PROSITE-ProRule" id="PRU00114"/>
    </source>
</evidence>
<evidence type="ECO:0000255" key="3">
    <source>
        <dbReference type="PROSITE-ProRule" id="PRU00498"/>
    </source>
</evidence>
<evidence type="ECO:0000269" key="4">
    <source>
    </source>
</evidence>
<evidence type="ECO:0000269" key="5">
    <source>
    </source>
</evidence>
<evidence type="ECO:0000269" key="6">
    <source>
    </source>
</evidence>
<evidence type="ECO:0000303" key="7">
    <source>
    </source>
</evidence>
<evidence type="ECO:0000305" key="8"/>
<evidence type="ECO:0000312" key="9">
    <source>
        <dbReference type="EMBL" id="AAL59606.1"/>
    </source>
</evidence>
<evidence type="ECO:0000312" key="10">
    <source>
        <dbReference type="Proteomes" id="UP000001940"/>
    </source>
</evidence>
<evidence type="ECO:0000312" key="11">
    <source>
        <dbReference type="WormBase" id="K10C3.3"/>
    </source>
</evidence>
<organism evidence="10">
    <name type="scientific">Caenorhabditis elegans</name>
    <dbReference type="NCBI Taxonomy" id="6239"/>
    <lineage>
        <taxon>Eukaryota</taxon>
        <taxon>Metazoa</taxon>
        <taxon>Ecdysozoa</taxon>
        <taxon>Nematoda</taxon>
        <taxon>Chromadorea</taxon>
        <taxon>Rhabditida</taxon>
        <taxon>Rhabditina</taxon>
        <taxon>Rhabditomorpha</taxon>
        <taxon>Rhabditoidea</taxon>
        <taxon>Rhabditidae</taxon>
        <taxon>Peloderinae</taxon>
        <taxon>Caenorhabditis</taxon>
    </lineage>
</organism>
<gene>
    <name evidence="11" type="primary">zig-1</name>
    <name evidence="11" type="ORF">K10C3.3</name>
</gene>
<protein>
    <recommendedName>
        <fullName evidence="7">Zwei Ig domain protein zig-1</fullName>
    </recommendedName>
    <alternativeName>
        <fullName evidence="7">2 Ig domain protein zig-1</fullName>
    </alternativeName>
</protein>
<name>ZIG1_CAEEL</name>
<proteinExistence type="evidence at transcript level"/>
<reference evidence="9" key="1">
    <citation type="journal article" date="2002" name="Science">
        <title>Immunoglobulin-domain proteins required for maintenance of ventral nerve cord organization.</title>
        <authorList>
            <person name="Aurelio O."/>
            <person name="Hall D."/>
            <person name="Hobert O."/>
        </authorList>
    </citation>
    <scope>NUCLEOTIDE SEQUENCE [MRNA]</scope>
    <scope>TISSUE SPECIFICITY</scope>
    <scope>DEVELOPMENTAL STAGE</scope>
</reference>
<reference evidence="10" key="2">
    <citation type="journal article" date="1998" name="Science">
        <title>Genome sequence of the nematode C. elegans: a platform for investigating biology.</title>
        <authorList>
            <consortium name="The C. elegans sequencing consortium"/>
        </authorList>
    </citation>
    <scope>NUCLEOTIDE SEQUENCE [LARGE SCALE GENOMIC DNA]</scope>
    <source>
        <strain evidence="10">Bristol N2</strain>
    </source>
</reference>
<reference evidence="8" key="3">
    <citation type="journal article" date="2009" name="Genetics">
        <title>The small, secreted immunoglobulin protein ZIG-3 maintains axon position in Caenorhabditis elegans.</title>
        <authorList>
            <person name="Benard C."/>
            <person name="Tjoe N."/>
            <person name="Boulin T."/>
            <person name="Recio J."/>
            <person name="Hobert O."/>
        </authorList>
    </citation>
    <scope>FUNCTION</scope>
    <scope>DISRUPTION PHENOTYPE</scope>
</reference>
<reference evidence="8" key="4">
    <citation type="journal article" date="2012" name="PLoS Genet.">
        <title>The secreted immunoglobulin domain proteins ZIG-5 and ZIG-8 cooperate with L1CAM/SAX-7 to maintain nervous system integrity.</title>
        <authorList>
            <person name="Benard C.Y."/>
            <person name="Blanchette C."/>
            <person name="Recio J."/>
            <person name="Hobert O."/>
        </authorList>
    </citation>
    <scope>FUNCTION</scope>
    <scope>DISRUPTION PHENOTYPE</scope>
</reference>
<keyword id="KW-1003">Cell membrane</keyword>
<keyword id="KW-1015">Disulfide bond</keyword>
<keyword id="KW-0325">Glycoprotein</keyword>
<keyword id="KW-0393">Immunoglobulin domain</keyword>
<keyword id="KW-0472">Membrane</keyword>
<keyword id="KW-1185">Reference proteome</keyword>
<keyword id="KW-0677">Repeat</keyword>
<keyword id="KW-0732">Signal</keyword>
<keyword id="KW-0812">Transmembrane</keyword>
<keyword id="KW-1133">Transmembrane helix</keyword>
<dbReference type="EMBL" id="AF456248">
    <property type="protein sequence ID" value="AAL59606.1"/>
    <property type="molecule type" value="mRNA"/>
</dbReference>
<dbReference type="EMBL" id="BX284601">
    <property type="protein sequence ID" value="CAB05773.2"/>
    <property type="molecule type" value="Genomic_DNA"/>
</dbReference>
<dbReference type="PIR" id="T23555">
    <property type="entry name" value="T23555"/>
</dbReference>
<dbReference type="RefSeq" id="NP_492608.2">
    <property type="nucleotide sequence ID" value="NM_060207.5"/>
</dbReference>
<dbReference type="SMR" id="G5EGI7"/>
<dbReference type="FunCoup" id="G5EGI7">
    <property type="interactions" value="28"/>
</dbReference>
<dbReference type="STRING" id="6239.K10C3.3.1"/>
<dbReference type="GlyCosmos" id="G5EGI7">
    <property type="glycosylation" value="2 sites, No reported glycans"/>
</dbReference>
<dbReference type="PaxDb" id="6239-K10C3.3"/>
<dbReference type="PeptideAtlas" id="G5EGI7"/>
<dbReference type="EnsemblMetazoa" id="K10C3.3.1">
    <property type="protein sequence ID" value="K10C3.3.1"/>
    <property type="gene ID" value="WBGene00006978"/>
</dbReference>
<dbReference type="GeneID" id="192086"/>
<dbReference type="KEGG" id="cel:CELE_K10C3.3"/>
<dbReference type="AGR" id="WB:WBGene00006978"/>
<dbReference type="CTD" id="192086"/>
<dbReference type="WormBase" id="K10C3.3">
    <property type="protein sequence ID" value="CE30349"/>
    <property type="gene ID" value="WBGene00006978"/>
    <property type="gene designation" value="zig-1"/>
</dbReference>
<dbReference type="eggNOG" id="ENOG502S3Y2">
    <property type="taxonomic scope" value="Eukaryota"/>
</dbReference>
<dbReference type="HOGENOM" id="CLU_963851_0_0_1"/>
<dbReference type="InParanoid" id="G5EGI7"/>
<dbReference type="OMA" id="TLWCQAE"/>
<dbReference type="OrthoDB" id="5969272at2759"/>
<dbReference type="PhylomeDB" id="G5EGI7"/>
<dbReference type="PRO" id="PR:G5EGI7"/>
<dbReference type="Proteomes" id="UP000001940">
    <property type="component" value="Chromosome I"/>
</dbReference>
<dbReference type="Bgee" id="WBGene00006978">
    <property type="expression patterns" value="Expressed in larva and 3 other cell types or tissues"/>
</dbReference>
<dbReference type="GO" id="GO:0030424">
    <property type="term" value="C:axon"/>
    <property type="evidence" value="ECO:0000318"/>
    <property type="project" value="GO_Central"/>
</dbReference>
<dbReference type="GO" id="GO:0005886">
    <property type="term" value="C:plasma membrane"/>
    <property type="evidence" value="ECO:0000318"/>
    <property type="project" value="GO_Central"/>
</dbReference>
<dbReference type="GO" id="GO:0098632">
    <property type="term" value="F:cell-cell adhesion mediator activity"/>
    <property type="evidence" value="ECO:0000318"/>
    <property type="project" value="GO_Central"/>
</dbReference>
<dbReference type="GO" id="GO:0007411">
    <property type="term" value="P:axon guidance"/>
    <property type="evidence" value="ECO:0000318"/>
    <property type="project" value="GO_Central"/>
</dbReference>
<dbReference type="GO" id="GO:0070593">
    <property type="term" value="P:dendrite self-avoidance"/>
    <property type="evidence" value="ECO:0000318"/>
    <property type="project" value="GO_Central"/>
</dbReference>
<dbReference type="GO" id="GO:0007156">
    <property type="term" value="P:homophilic cell adhesion via plasma membrane adhesion molecules"/>
    <property type="evidence" value="ECO:0000318"/>
    <property type="project" value="GO_Central"/>
</dbReference>
<dbReference type="CDD" id="cd00096">
    <property type="entry name" value="Ig"/>
    <property type="match status" value="1"/>
</dbReference>
<dbReference type="FunFam" id="2.60.40.10:FF:000328">
    <property type="entry name" value="CLUMA_CG000981, isoform A"/>
    <property type="match status" value="1"/>
</dbReference>
<dbReference type="Gene3D" id="2.60.40.10">
    <property type="entry name" value="Immunoglobulins"/>
    <property type="match status" value="2"/>
</dbReference>
<dbReference type="InterPro" id="IPR007110">
    <property type="entry name" value="Ig-like_dom"/>
</dbReference>
<dbReference type="InterPro" id="IPR036179">
    <property type="entry name" value="Ig-like_dom_sf"/>
</dbReference>
<dbReference type="InterPro" id="IPR013783">
    <property type="entry name" value="Ig-like_fold"/>
</dbReference>
<dbReference type="InterPro" id="IPR003599">
    <property type="entry name" value="Ig_sub"/>
</dbReference>
<dbReference type="InterPro" id="IPR003598">
    <property type="entry name" value="Ig_sub2"/>
</dbReference>
<dbReference type="PANTHER" id="PTHR10075">
    <property type="entry name" value="BASIGIN RELATED"/>
    <property type="match status" value="1"/>
</dbReference>
<dbReference type="PANTHER" id="PTHR10075:SF104">
    <property type="entry name" value="BASIGIN, ISOFORM G"/>
    <property type="match status" value="1"/>
</dbReference>
<dbReference type="Pfam" id="PF13927">
    <property type="entry name" value="Ig_3"/>
    <property type="match status" value="1"/>
</dbReference>
<dbReference type="SMART" id="SM00409">
    <property type="entry name" value="IG"/>
    <property type="match status" value="2"/>
</dbReference>
<dbReference type="SMART" id="SM00408">
    <property type="entry name" value="IGc2"/>
    <property type="match status" value="2"/>
</dbReference>
<dbReference type="SUPFAM" id="SSF48726">
    <property type="entry name" value="Immunoglobulin"/>
    <property type="match status" value="1"/>
</dbReference>
<dbReference type="PROSITE" id="PS50835">
    <property type="entry name" value="IG_LIKE"/>
    <property type="match status" value="1"/>
</dbReference>
<comment type="function">
    <text evidence="5 6">Probably not involved in maintaining the position of ASI and ASH head neuron cell bodies and ventral nerve cord axons of PVQ, PVP, RMEV, AVK and HSN neurons.</text>
</comment>
<comment type="subcellular location">
    <subcellularLocation>
        <location evidence="8">Cell membrane</location>
        <topology evidence="8">Single-pass type I membrane protein</topology>
    </subcellularLocation>
</comment>
<comment type="tissue specificity">
    <text evidence="4">Expressed in neurons and body wall muscles.</text>
</comment>
<comment type="developmental stage">
    <text evidence="4">Expression begins at the late L1 larval stage.</text>
</comment>
<comment type="disruption phenotype">
    <text evidence="5 6">No visible phenotype (PubMed:19737747, PubMed:22829780). No defect in the positioning of ASI and ASH neuron cell bodies (PubMed:22829780). No defect in the positioning of PQV, PVP, RMEV, HSN and AVK axons in the ventral nerve cord (PubMed:19737747). In a zig-2, zig-3, zig-4 or zig-5 or zig-8 mutant background, cell body positioning of ASI and ASH head neurons is normal (PubMed:22829780).</text>
</comment>